<evidence type="ECO:0000250" key="1">
    <source>
        <dbReference type="UniProtKB" id="P49247"/>
    </source>
</evidence>
<evidence type="ECO:0000256" key="2">
    <source>
        <dbReference type="SAM" id="MobiDB-lite"/>
    </source>
</evidence>
<evidence type="ECO:0000269" key="3">
    <source>
    </source>
</evidence>
<evidence type="ECO:0000305" key="4"/>
<accession>P47968</accession>
<accession>Q3UVI8</accession>
<keyword id="KW-0413">Isomerase</keyword>
<keyword id="KW-0488">Methylation</keyword>
<keyword id="KW-0597">Phosphoprotein</keyword>
<keyword id="KW-1185">Reference proteome</keyword>
<name>RPIA_MOUSE</name>
<feature type="chain" id="PRO_0000158522" description="Ribose-5-phosphate isomerase">
    <location>
        <begin position="1"/>
        <end position="303"/>
    </location>
</feature>
<feature type="region of interest" description="Disordered" evidence="2">
    <location>
        <begin position="22"/>
        <end position="75"/>
    </location>
</feature>
<feature type="compositionally biased region" description="Gly residues" evidence="2">
    <location>
        <begin position="22"/>
        <end position="33"/>
    </location>
</feature>
<feature type="modified residue" description="Omega-N-methylarginine" evidence="1">
    <location>
        <position position="52"/>
    </location>
</feature>
<feature type="modified residue" description="Phosphoserine" evidence="1">
    <location>
        <position position="99"/>
    </location>
</feature>
<feature type="sequence conflict" description="In Ref. 2; BAE23281." evidence="4" ref="2">
    <original>E</original>
    <variation>D</variation>
    <location>
        <position position="84"/>
    </location>
</feature>
<comment type="catalytic activity">
    <reaction evidence="3">
        <text>aldehydo-D-ribose 5-phosphate = D-ribulose 5-phosphate</text>
        <dbReference type="Rhea" id="RHEA:14657"/>
        <dbReference type="ChEBI" id="CHEBI:58121"/>
        <dbReference type="ChEBI" id="CHEBI:58273"/>
        <dbReference type="EC" id="5.3.1.6"/>
    </reaction>
</comment>
<comment type="pathway">
    <text evidence="3">Carbohydrate degradation; pentose phosphate pathway; D-ribose 5-phosphate from D-ribulose 5-phosphate (non-oxidative stage): step 1/1.</text>
</comment>
<comment type="tissue specificity">
    <text evidence="3">Widely expressed, with highest levels in testis.</text>
</comment>
<comment type="similarity">
    <text evidence="4">Belongs to the ribose 5-phosphate isomerase family.</text>
</comment>
<comment type="sequence caution" evidence="4">
    <conflict type="erroneous initiation">
        <sequence resource="EMBL-CDS" id="AAC42060"/>
    </conflict>
</comment>
<comment type="sequence caution" evidence="4">
    <conflict type="erroneous initiation">
        <sequence resource="EMBL-CDS" id="BAE23281"/>
    </conflict>
</comment>
<sequence>MQRPGPFSTLYGRVLAPLPGRAGGAASGGGGNNWGLSGSHVQLPGRAHSETRGDKGGSSAGGPAPSTMSKAEEAKKLASHTAVENHVKNNQVLGIGSGSTIVHAVQRIAERVKQENLDLICIPTSFQARQLILQYGLTLSDLDQHPEIDLAIDGADEVDAELNLIKGGGGCLTQEKIVAGYASRFIVIADFRKDSKNLGDRWHKGIPIEVIPMAYVPVSRAVAQKFGGEVELRMAVNKAGPVVTDNGNFILDWKFDRVHKWSEVNTAIKMTPGVVDTGLFINMAERVYFGMQDGSVNVREKPF</sequence>
<reference key="1">
    <citation type="journal article" date="1995" name="Gene">
        <title>The ribose 5-phosphate isomerase-encoding gene is located immediately downstream from that encoding murine immunoglobulin kappa.</title>
        <authorList>
            <person name="Apel T.W."/>
            <person name="Scherer A."/>
            <person name="Adachi T."/>
            <person name="Auch D."/>
            <person name="Ayane M."/>
            <person name="Reth M."/>
        </authorList>
    </citation>
    <scope>NUCLEOTIDE SEQUENCE [MRNA]</scope>
    <scope>CATALYTIC ACTIVITY</scope>
    <scope>TISSUE SPECIFICITY</scope>
    <source>
        <strain>BALB/cJ</strain>
        <tissue>Pre-B cell</tissue>
    </source>
</reference>
<reference key="2">
    <citation type="journal article" date="2005" name="Science">
        <title>The transcriptional landscape of the mammalian genome.</title>
        <authorList>
            <person name="Carninci P."/>
            <person name="Kasukawa T."/>
            <person name="Katayama S."/>
            <person name="Gough J."/>
            <person name="Frith M.C."/>
            <person name="Maeda N."/>
            <person name="Oyama R."/>
            <person name="Ravasi T."/>
            <person name="Lenhard B."/>
            <person name="Wells C."/>
            <person name="Kodzius R."/>
            <person name="Shimokawa K."/>
            <person name="Bajic V.B."/>
            <person name="Brenner S.E."/>
            <person name="Batalov S."/>
            <person name="Forrest A.R."/>
            <person name="Zavolan M."/>
            <person name="Davis M.J."/>
            <person name="Wilming L.G."/>
            <person name="Aidinis V."/>
            <person name="Allen J.E."/>
            <person name="Ambesi-Impiombato A."/>
            <person name="Apweiler R."/>
            <person name="Aturaliya R.N."/>
            <person name="Bailey T.L."/>
            <person name="Bansal M."/>
            <person name="Baxter L."/>
            <person name="Beisel K.W."/>
            <person name="Bersano T."/>
            <person name="Bono H."/>
            <person name="Chalk A.M."/>
            <person name="Chiu K.P."/>
            <person name="Choudhary V."/>
            <person name="Christoffels A."/>
            <person name="Clutterbuck D.R."/>
            <person name="Crowe M.L."/>
            <person name="Dalla E."/>
            <person name="Dalrymple B.P."/>
            <person name="de Bono B."/>
            <person name="Della Gatta G."/>
            <person name="di Bernardo D."/>
            <person name="Down T."/>
            <person name="Engstrom P."/>
            <person name="Fagiolini M."/>
            <person name="Faulkner G."/>
            <person name="Fletcher C.F."/>
            <person name="Fukushima T."/>
            <person name="Furuno M."/>
            <person name="Futaki S."/>
            <person name="Gariboldi M."/>
            <person name="Georgii-Hemming P."/>
            <person name="Gingeras T.R."/>
            <person name="Gojobori T."/>
            <person name="Green R.E."/>
            <person name="Gustincich S."/>
            <person name="Harbers M."/>
            <person name="Hayashi Y."/>
            <person name="Hensch T.K."/>
            <person name="Hirokawa N."/>
            <person name="Hill D."/>
            <person name="Huminiecki L."/>
            <person name="Iacono M."/>
            <person name="Ikeo K."/>
            <person name="Iwama A."/>
            <person name="Ishikawa T."/>
            <person name="Jakt M."/>
            <person name="Kanapin A."/>
            <person name="Katoh M."/>
            <person name="Kawasawa Y."/>
            <person name="Kelso J."/>
            <person name="Kitamura H."/>
            <person name="Kitano H."/>
            <person name="Kollias G."/>
            <person name="Krishnan S.P."/>
            <person name="Kruger A."/>
            <person name="Kummerfeld S.K."/>
            <person name="Kurochkin I.V."/>
            <person name="Lareau L.F."/>
            <person name="Lazarevic D."/>
            <person name="Lipovich L."/>
            <person name="Liu J."/>
            <person name="Liuni S."/>
            <person name="McWilliam S."/>
            <person name="Madan Babu M."/>
            <person name="Madera M."/>
            <person name="Marchionni L."/>
            <person name="Matsuda H."/>
            <person name="Matsuzawa S."/>
            <person name="Miki H."/>
            <person name="Mignone F."/>
            <person name="Miyake S."/>
            <person name="Morris K."/>
            <person name="Mottagui-Tabar S."/>
            <person name="Mulder N."/>
            <person name="Nakano N."/>
            <person name="Nakauchi H."/>
            <person name="Ng P."/>
            <person name="Nilsson R."/>
            <person name="Nishiguchi S."/>
            <person name="Nishikawa S."/>
            <person name="Nori F."/>
            <person name="Ohara O."/>
            <person name="Okazaki Y."/>
            <person name="Orlando V."/>
            <person name="Pang K.C."/>
            <person name="Pavan W.J."/>
            <person name="Pavesi G."/>
            <person name="Pesole G."/>
            <person name="Petrovsky N."/>
            <person name="Piazza S."/>
            <person name="Reed J."/>
            <person name="Reid J.F."/>
            <person name="Ring B.Z."/>
            <person name="Ringwald M."/>
            <person name="Rost B."/>
            <person name="Ruan Y."/>
            <person name="Salzberg S.L."/>
            <person name="Sandelin A."/>
            <person name="Schneider C."/>
            <person name="Schoenbach C."/>
            <person name="Sekiguchi K."/>
            <person name="Semple C.A."/>
            <person name="Seno S."/>
            <person name="Sessa L."/>
            <person name="Sheng Y."/>
            <person name="Shibata Y."/>
            <person name="Shimada H."/>
            <person name="Shimada K."/>
            <person name="Silva D."/>
            <person name="Sinclair B."/>
            <person name="Sperling S."/>
            <person name="Stupka E."/>
            <person name="Sugiura K."/>
            <person name="Sultana R."/>
            <person name="Takenaka Y."/>
            <person name="Taki K."/>
            <person name="Tammoja K."/>
            <person name="Tan S.L."/>
            <person name="Tang S."/>
            <person name="Taylor M.S."/>
            <person name="Tegner J."/>
            <person name="Teichmann S.A."/>
            <person name="Ueda H.R."/>
            <person name="van Nimwegen E."/>
            <person name="Verardo R."/>
            <person name="Wei C.L."/>
            <person name="Yagi K."/>
            <person name="Yamanishi H."/>
            <person name="Zabarovsky E."/>
            <person name="Zhu S."/>
            <person name="Zimmer A."/>
            <person name="Hide W."/>
            <person name="Bult C."/>
            <person name="Grimmond S.M."/>
            <person name="Teasdale R.D."/>
            <person name="Liu E.T."/>
            <person name="Brusic V."/>
            <person name="Quackenbush J."/>
            <person name="Wahlestedt C."/>
            <person name="Mattick J.S."/>
            <person name="Hume D.A."/>
            <person name="Kai C."/>
            <person name="Sasaki D."/>
            <person name="Tomaru Y."/>
            <person name="Fukuda S."/>
            <person name="Kanamori-Katayama M."/>
            <person name="Suzuki M."/>
            <person name="Aoki J."/>
            <person name="Arakawa T."/>
            <person name="Iida J."/>
            <person name="Imamura K."/>
            <person name="Itoh M."/>
            <person name="Kato T."/>
            <person name="Kawaji H."/>
            <person name="Kawagashira N."/>
            <person name="Kawashima T."/>
            <person name="Kojima M."/>
            <person name="Kondo S."/>
            <person name="Konno H."/>
            <person name="Nakano K."/>
            <person name="Ninomiya N."/>
            <person name="Nishio T."/>
            <person name="Okada M."/>
            <person name="Plessy C."/>
            <person name="Shibata K."/>
            <person name="Shiraki T."/>
            <person name="Suzuki S."/>
            <person name="Tagami M."/>
            <person name="Waki K."/>
            <person name="Watahiki A."/>
            <person name="Okamura-Oho Y."/>
            <person name="Suzuki H."/>
            <person name="Kawai J."/>
            <person name="Hayashizaki Y."/>
        </authorList>
    </citation>
    <scope>NUCLEOTIDE SEQUENCE [LARGE SCALE MRNA] OF 48-303</scope>
    <source>
        <strain>C57BL/6J</strain>
        <tissue>Urinary bladder</tissue>
    </source>
</reference>
<reference key="3">
    <citation type="journal article" date="2004" name="Genome Res.">
        <title>The status, quality, and expansion of the NIH full-length cDNA project: the Mammalian Gene Collection (MGC).</title>
        <authorList>
            <consortium name="The MGC Project Team"/>
        </authorList>
    </citation>
    <scope>NUCLEOTIDE SEQUENCE [LARGE SCALE MRNA] OF 52-303</scope>
    <source>
        <strain>FVB/N-3</strain>
        <tissue>Mammary gland</tissue>
    </source>
</reference>
<reference key="4">
    <citation type="journal article" date="2010" name="Cell">
        <title>A tissue-specific atlas of mouse protein phosphorylation and expression.</title>
        <authorList>
            <person name="Huttlin E.L."/>
            <person name="Jedrychowski M.P."/>
            <person name="Elias J.E."/>
            <person name="Goswami T."/>
            <person name="Rad R."/>
            <person name="Beausoleil S.A."/>
            <person name="Villen J."/>
            <person name="Haas W."/>
            <person name="Sowa M.E."/>
            <person name="Gygi S.P."/>
        </authorList>
    </citation>
    <scope>IDENTIFICATION BY MASS SPECTROMETRY [LARGE SCALE ANALYSIS]</scope>
    <source>
        <tissue>Brown adipose tissue</tissue>
        <tissue>Heart</tissue>
        <tissue>Kidney</tissue>
        <tissue>Liver</tissue>
        <tissue>Lung</tissue>
        <tissue>Spleen</tissue>
        <tissue>Testis</tissue>
    </source>
</reference>
<organism>
    <name type="scientific">Mus musculus</name>
    <name type="common">Mouse</name>
    <dbReference type="NCBI Taxonomy" id="10090"/>
    <lineage>
        <taxon>Eukaryota</taxon>
        <taxon>Metazoa</taxon>
        <taxon>Chordata</taxon>
        <taxon>Craniata</taxon>
        <taxon>Vertebrata</taxon>
        <taxon>Euteleostomi</taxon>
        <taxon>Mammalia</taxon>
        <taxon>Eutheria</taxon>
        <taxon>Euarchontoglires</taxon>
        <taxon>Glires</taxon>
        <taxon>Rodentia</taxon>
        <taxon>Myomorpha</taxon>
        <taxon>Muroidea</taxon>
        <taxon>Muridae</taxon>
        <taxon>Murinae</taxon>
        <taxon>Mus</taxon>
        <taxon>Mus</taxon>
    </lineage>
</organism>
<protein>
    <recommendedName>
        <fullName>Ribose-5-phosphate isomerase</fullName>
        <ecNumber evidence="3">5.3.1.6</ecNumber>
    </recommendedName>
    <alternativeName>
        <fullName>Phosphoriboisomerase</fullName>
    </alternativeName>
</protein>
<dbReference type="EC" id="5.3.1.6" evidence="3"/>
<dbReference type="EMBL" id="L35034">
    <property type="protein sequence ID" value="AAC42060.1"/>
    <property type="status" value="ALT_INIT"/>
    <property type="molecule type" value="mRNA"/>
</dbReference>
<dbReference type="EMBL" id="AK137235">
    <property type="protein sequence ID" value="BAE23281.1"/>
    <property type="status" value="ALT_INIT"/>
    <property type="molecule type" value="mRNA"/>
</dbReference>
<dbReference type="EMBL" id="BC053526">
    <property type="protein sequence ID" value="AAH53526.2"/>
    <property type="molecule type" value="mRNA"/>
</dbReference>
<dbReference type="CCDS" id="CCDS39504.1"/>
<dbReference type="PIR" id="I53951">
    <property type="entry name" value="I53951"/>
</dbReference>
<dbReference type="RefSeq" id="NP_033101.2">
    <property type="nucleotide sequence ID" value="NM_009075.2"/>
</dbReference>
<dbReference type="SMR" id="P47968"/>
<dbReference type="BioGRID" id="202965">
    <property type="interactions" value="14"/>
</dbReference>
<dbReference type="FunCoup" id="P47968">
    <property type="interactions" value="3595"/>
</dbReference>
<dbReference type="STRING" id="10090.ENSMUSP00000064158"/>
<dbReference type="iPTMnet" id="P47968"/>
<dbReference type="PhosphoSitePlus" id="P47968"/>
<dbReference type="SwissPalm" id="P47968"/>
<dbReference type="CPTAC" id="CPTAC-2767"/>
<dbReference type="jPOST" id="P47968"/>
<dbReference type="PaxDb" id="10090-ENSMUSP00000064158"/>
<dbReference type="PeptideAtlas" id="P47968"/>
<dbReference type="ProteomicsDB" id="300481"/>
<dbReference type="Pumba" id="P47968"/>
<dbReference type="Antibodypedia" id="32248">
    <property type="antibodies" value="165 antibodies from 26 providers"/>
</dbReference>
<dbReference type="DNASU" id="19895"/>
<dbReference type="Ensembl" id="ENSMUST00000066134.6">
    <property type="protein sequence ID" value="ENSMUSP00000064158.6"/>
    <property type="gene ID" value="ENSMUSG00000053604.6"/>
</dbReference>
<dbReference type="GeneID" id="19895"/>
<dbReference type="KEGG" id="mmu:19895"/>
<dbReference type="UCSC" id="uc009cfy.1">
    <property type="organism name" value="mouse"/>
</dbReference>
<dbReference type="AGR" id="MGI:103254"/>
<dbReference type="CTD" id="22934"/>
<dbReference type="MGI" id="MGI:103254">
    <property type="gene designation" value="Rpia"/>
</dbReference>
<dbReference type="VEuPathDB" id="HostDB:ENSMUSG00000053604"/>
<dbReference type="eggNOG" id="KOG3075">
    <property type="taxonomic scope" value="Eukaryota"/>
</dbReference>
<dbReference type="GeneTree" id="ENSGT00390000004352"/>
<dbReference type="HOGENOM" id="CLU_056590_0_2_1"/>
<dbReference type="InParanoid" id="P47968"/>
<dbReference type="OMA" id="ACHVQEK"/>
<dbReference type="OrthoDB" id="1555531at2759"/>
<dbReference type="PhylomeDB" id="P47968"/>
<dbReference type="TreeFam" id="TF105758"/>
<dbReference type="Reactome" id="R-MMU-71336">
    <property type="pathway name" value="Pentose phosphate pathway"/>
</dbReference>
<dbReference type="UniPathway" id="UPA00115">
    <property type="reaction ID" value="UER00412"/>
</dbReference>
<dbReference type="BioGRID-ORCS" id="19895">
    <property type="hits" value="24 hits in 80 CRISPR screens"/>
</dbReference>
<dbReference type="PRO" id="PR:P47968"/>
<dbReference type="Proteomes" id="UP000000589">
    <property type="component" value="Chromosome 6"/>
</dbReference>
<dbReference type="RNAct" id="P47968">
    <property type="molecule type" value="protein"/>
</dbReference>
<dbReference type="Bgee" id="ENSMUSG00000053604">
    <property type="expression patterns" value="Expressed in gastrula and 255 other cell types or tissues"/>
</dbReference>
<dbReference type="GO" id="GO:0005829">
    <property type="term" value="C:cytosol"/>
    <property type="evidence" value="ECO:0000314"/>
    <property type="project" value="MGI"/>
</dbReference>
<dbReference type="GO" id="GO:0042802">
    <property type="term" value="F:identical protein binding"/>
    <property type="evidence" value="ECO:0007669"/>
    <property type="project" value="Ensembl"/>
</dbReference>
<dbReference type="GO" id="GO:0048029">
    <property type="term" value="F:monosaccharide binding"/>
    <property type="evidence" value="ECO:0007669"/>
    <property type="project" value="Ensembl"/>
</dbReference>
<dbReference type="GO" id="GO:0004751">
    <property type="term" value="F:ribose-5-phosphate isomerase activity"/>
    <property type="evidence" value="ECO:0000314"/>
    <property type="project" value="MGI"/>
</dbReference>
<dbReference type="GO" id="GO:0006098">
    <property type="term" value="P:pentose-phosphate shunt"/>
    <property type="evidence" value="ECO:0000314"/>
    <property type="project" value="MGI"/>
</dbReference>
<dbReference type="GO" id="GO:0009052">
    <property type="term" value="P:pentose-phosphate shunt, non-oxidative branch"/>
    <property type="evidence" value="ECO:0007669"/>
    <property type="project" value="Ensembl"/>
</dbReference>
<dbReference type="CDD" id="cd01398">
    <property type="entry name" value="RPI_A"/>
    <property type="match status" value="1"/>
</dbReference>
<dbReference type="FunFam" id="3.40.50.1360:FF:000013">
    <property type="entry name" value="Ribose 5-phosphate isomerase A"/>
    <property type="match status" value="1"/>
</dbReference>
<dbReference type="FunFam" id="3.30.70.260:FF:000018">
    <property type="entry name" value="Ribose-5-phosphate isomerase A"/>
    <property type="match status" value="1"/>
</dbReference>
<dbReference type="Gene3D" id="3.30.70.260">
    <property type="match status" value="1"/>
</dbReference>
<dbReference type="Gene3D" id="3.40.50.1360">
    <property type="match status" value="1"/>
</dbReference>
<dbReference type="HAMAP" id="MF_00170">
    <property type="entry name" value="Rib_5P_isom_A"/>
    <property type="match status" value="1"/>
</dbReference>
<dbReference type="InterPro" id="IPR037171">
    <property type="entry name" value="NagB/RpiA_transferase-like"/>
</dbReference>
<dbReference type="InterPro" id="IPR020672">
    <property type="entry name" value="Ribose5P_isomerase_typA_subgr"/>
</dbReference>
<dbReference type="InterPro" id="IPR004788">
    <property type="entry name" value="Ribose5P_isomerase_type_A"/>
</dbReference>
<dbReference type="NCBIfam" id="NF001924">
    <property type="entry name" value="PRK00702.1"/>
    <property type="match status" value="1"/>
</dbReference>
<dbReference type="NCBIfam" id="TIGR00021">
    <property type="entry name" value="rpiA"/>
    <property type="match status" value="1"/>
</dbReference>
<dbReference type="PANTHER" id="PTHR11934">
    <property type="entry name" value="RIBOSE-5-PHOSPHATE ISOMERASE"/>
    <property type="match status" value="1"/>
</dbReference>
<dbReference type="PANTHER" id="PTHR11934:SF0">
    <property type="entry name" value="RIBOSE-5-PHOSPHATE ISOMERASE"/>
    <property type="match status" value="1"/>
</dbReference>
<dbReference type="Pfam" id="PF06026">
    <property type="entry name" value="Rib_5-P_isom_A"/>
    <property type="match status" value="1"/>
</dbReference>
<dbReference type="SUPFAM" id="SSF75445">
    <property type="entry name" value="D-ribose-5-phosphate isomerase (RpiA), lid domain"/>
    <property type="match status" value="1"/>
</dbReference>
<dbReference type="SUPFAM" id="SSF100950">
    <property type="entry name" value="NagB/RpiA/CoA transferase-like"/>
    <property type="match status" value="1"/>
</dbReference>
<gene>
    <name type="primary">Rpia</name>
    <name type="synonym">Rpi</name>
</gene>
<proteinExistence type="evidence at protein level"/>